<sequence length="892" mass="97010">MSQQTTIRKLAELVNTPVEKLLEQLAGAGMKFSGPDQVVTSTEKMKLLGFLRRTHGKSDVSVGAVREAPKKITLNRRRLQEVTVNAGRNKTTVNVEVRQKRTYVKTPESEYHTPTKPPIELGDAERVEILRKLEESRQRNLAEQQRLAEVDRQRVEEQERKRLEEEQAELERQKTESPVVEEVPVQSDSNSVKPVSKPISEDRTRALPRAVRPAPAARPSVSRSDDRNSNSGVRHKPRGSHVIVSDEDDSARRFAGQMHLTAAERARRGSNTRGKGGGSHRGATHRGNENSIRSSGAHGFERPTAAVVREVAVGDTITVADLAQKLALKSGDMVKALFKMGVMVTITQTIDHDTAVLVSEELGHKVTRASSSDFEDALLAHTEEVHGEPVPRPPVVTIMGHVDHGKTSLLDYIRRTKIAVGEAGGITQHIGAYHVETPRGVISFLDTPGHAAFTSMRARGAKITDIVVLVVAADDGVMPQTKEAVQHARAAGVPLIVAVSKIDKSTADPQRVKNELLTESVVAEEFGGDTQFVELSAKTGVGVDALLDAISIQAEVLELKAVIEGRATGTVIESSLDKGRGPVATVLVQQGRLKKGDYLVCGTHYGRVRALFDEVGHQPLAASPSIPVQVLGLSGVPDAGDDFVVVDDERLAKDVAQQREAKRRESRLVTSAGNRMEDILAQMGKGENQQVLNLLIKADVQGSLEALKQALVALSNDDIRINVIHVGVGGITESDANSAVTSKATVIGFNVRADASARKIIEANGVDLRYFSIIYDVIDQVKQVASGLLGVEIREEIIGVAEVRDVFRSSKFGAVAGCMIIEGVVKRSKPIRVLRDNTVVFEGELESLRRFKENVDEVRNSTECGIGVKAYNDVRVGDHIECFERIEVARTL</sequence>
<comment type="function">
    <text evidence="1">One of the essential components for the initiation of protein synthesis. Protects formylmethionyl-tRNA from spontaneous hydrolysis and promotes its binding to the 30S ribosomal subunits. Also involved in the hydrolysis of GTP during the formation of the 70S ribosomal complex.</text>
</comment>
<comment type="subcellular location">
    <subcellularLocation>
        <location evidence="1">Cytoplasm</location>
    </subcellularLocation>
</comment>
<comment type="similarity">
    <text evidence="1">Belongs to the TRAFAC class translation factor GTPase superfamily. Classic translation factor GTPase family. IF-2 subfamily.</text>
</comment>
<accession>Q9PGR3</accession>
<feature type="chain" id="PRO_0000137287" description="Translation initiation factor IF-2">
    <location>
        <begin position="1"/>
        <end position="892"/>
    </location>
</feature>
<feature type="domain" description="tr-type G">
    <location>
        <begin position="391"/>
        <end position="560"/>
    </location>
</feature>
<feature type="region of interest" description="Disordered" evidence="2">
    <location>
        <begin position="165"/>
        <end position="250"/>
    </location>
</feature>
<feature type="region of interest" description="Disordered" evidence="2">
    <location>
        <begin position="264"/>
        <end position="300"/>
    </location>
</feature>
<feature type="compositionally biased region" description="Basic and acidic residues" evidence="2">
    <location>
        <begin position="165"/>
        <end position="175"/>
    </location>
</feature>
<feature type="compositionally biased region" description="Low complexity" evidence="2">
    <location>
        <begin position="208"/>
        <end position="222"/>
    </location>
</feature>
<feature type="binding site" evidence="1">
    <location>
        <begin position="400"/>
        <end position="407"/>
    </location>
    <ligand>
        <name>GTP</name>
        <dbReference type="ChEBI" id="CHEBI:37565"/>
    </ligand>
</feature>
<feature type="binding site" evidence="1">
    <location>
        <begin position="446"/>
        <end position="450"/>
    </location>
    <ligand>
        <name>GTP</name>
        <dbReference type="ChEBI" id="CHEBI:37565"/>
    </ligand>
</feature>
<feature type="binding site" evidence="1">
    <location>
        <begin position="500"/>
        <end position="503"/>
    </location>
    <ligand>
        <name>GTP</name>
        <dbReference type="ChEBI" id="CHEBI:37565"/>
    </ligand>
</feature>
<name>IF2_XYLFA</name>
<gene>
    <name evidence="1" type="primary">infB</name>
    <name type="ordered locus">XF_0235</name>
</gene>
<proteinExistence type="inferred from homology"/>
<organism>
    <name type="scientific">Xylella fastidiosa (strain 9a5c)</name>
    <dbReference type="NCBI Taxonomy" id="160492"/>
    <lineage>
        <taxon>Bacteria</taxon>
        <taxon>Pseudomonadati</taxon>
        <taxon>Pseudomonadota</taxon>
        <taxon>Gammaproteobacteria</taxon>
        <taxon>Lysobacterales</taxon>
        <taxon>Lysobacteraceae</taxon>
        <taxon>Xylella</taxon>
    </lineage>
</organism>
<protein>
    <recommendedName>
        <fullName evidence="1">Translation initiation factor IF-2</fullName>
    </recommendedName>
</protein>
<dbReference type="EMBL" id="AE003849">
    <property type="protein sequence ID" value="AAF83048.1"/>
    <property type="molecule type" value="Genomic_DNA"/>
</dbReference>
<dbReference type="PIR" id="B82831">
    <property type="entry name" value="B82831"/>
</dbReference>
<dbReference type="RefSeq" id="WP_010892776.1">
    <property type="nucleotide sequence ID" value="NC_002488.3"/>
</dbReference>
<dbReference type="SMR" id="Q9PGR3"/>
<dbReference type="STRING" id="160492.XF_0235"/>
<dbReference type="KEGG" id="xfa:XF_0235"/>
<dbReference type="eggNOG" id="COG0532">
    <property type="taxonomic scope" value="Bacteria"/>
</dbReference>
<dbReference type="HOGENOM" id="CLU_006301_6_0_6"/>
<dbReference type="Proteomes" id="UP000000812">
    <property type="component" value="Chromosome"/>
</dbReference>
<dbReference type="GO" id="GO:0005829">
    <property type="term" value="C:cytosol"/>
    <property type="evidence" value="ECO:0007669"/>
    <property type="project" value="TreeGrafter"/>
</dbReference>
<dbReference type="GO" id="GO:0005525">
    <property type="term" value="F:GTP binding"/>
    <property type="evidence" value="ECO:0007669"/>
    <property type="project" value="UniProtKB-KW"/>
</dbReference>
<dbReference type="GO" id="GO:0003924">
    <property type="term" value="F:GTPase activity"/>
    <property type="evidence" value="ECO:0007669"/>
    <property type="project" value="UniProtKB-UniRule"/>
</dbReference>
<dbReference type="GO" id="GO:0097216">
    <property type="term" value="F:guanosine tetraphosphate binding"/>
    <property type="evidence" value="ECO:0007669"/>
    <property type="project" value="UniProtKB-ARBA"/>
</dbReference>
<dbReference type="GO" id="GO:0003743">
    <property type="term" value="F:translation initiation factor activity"/>
    <property type="evidence" value="ECO:0007669"/>
    <property type="project" value="UniProtKB-UniRule"/>
</dbReference>
<dbReference type="CDD" id="cd01887">
    <property type="entry name" value="IF2_eIF5B"/>
    <property type="match status" value="1"/>
</dbReference>
<dbReference type="CDD" id="cd03702">
    <property type="entry name" value="IF2_mtIF2_II"/>
    <property type="match status" value="1"/>
</dbReference>
<dbReference type="CDD" id="cd03692">
    <property type="entry name" value="mtIF2_IVc"/>
    <property type="match status" value="1"/>
</dbReference>
<dbReference type="FunFam" id="2.40.30.10:FF:000008">
    <property type="entry name" value="Translation initiation factor IF-2"/>
    <property type="match status" value="1"/>
</dbReference>
<dbReference type="FunFam" id="2.40.30.10:FF:000054">
    <property type="entry name" value="Translation initiation factor IF-2"/>
    <property type="match status" value="1"/>
</dbReference>
<dbReference type="FunFam" id="3.40.50.10050:FF:000001">
    <property type="entry name" value="Translation initiation factor IF-2"/>
    <property type="match status" value="1"/>
</dbReference>
<dbReference type="FunFam" id="3.40.50.300:FF:000019">
    <property type="entry name" value="Translation initiation factor IF-2"/>
    <property type="match status" value="1"/>
</dbReference>
<dbReference type="Gene3D" id="3.40.50.300">
    <property type="entry name" value="P-loop containing nucleotide triphosphate hydrolases"/>
    <property type="match status" value="1"/>
</dbReference>
<dbReference type="Gene3D" id="3.30.56.50">
    <property type="entry name" value="Putative DNA-binding domain, N-terminal subdomain of bacterial translation initiation factor IF2"/>
    <property type="match status" value="1"/>
</dbReference>
<dbReference type="Gene3D" id="2.40.30.10">
    <property type="entry name" value="Translation factors"/>
    <property type="match status" value="2"/>
</dbReference>
<dbReference type="Gene3D" id="3.40.50.10050">
    <property type="entry name" value="Translation initiation factor IF- 2, domain 3"/>
    <property type="match status" value="1"/>
</dbReference>
<dbReference type="HAMAP" id="MF_00100_B">
    <property type="entry name" value="IF_2_B"/>
    <property type="match status" value="1"/>
</dbReference>
<dbReference type="InterPro" id="IPR009061">
    <property type="entry name" value="DNA-bd_dom_put_sf"/>
</dbReference>
<dbReference type="InterPro" id="IPR053905">
    <property type="entry name" value="EF-G-like_DII"/>
</dbReference>
<dbReference type="InterPro" id="IPR004161">
    <property type="entry name" value="EFTu-like_2"/>
</dbReference>
<dbReference type="InterPro" id="IPR013575">
    <property type="entry name" value="IF2_assoc_dom_bac"/>
</dbReference>
<dbReference type="InterPro" id="IPR044145">
    <property type="entry name" value="IF2_II"/>
</dbReference>
<dbReference type="InterPro" id="IPR006847">
    <property type="entry name" value="IF2_N"/>
</dbReference>
<dbReference type="InterPro" id="IPR027417">
    <property type="entry name" value="P-loop_NTPase"/>
</dbReference>
<dbReference type="InterPro" id="IPR005225">
    <property type="entry name" value="Small_GTP-bd"/>
</dbReference>
<dbReference type="InterPro" id="IPR000795">
    <property type="entry name" value="T_Tr_GTP-bd_dom"/>
</dbReference>
<dbReference type="InterPro" id="IPR000178">
    <property type="entry name" value="TF_IF2_bacterial-like"/>
</dbReference>
<dbReference type="InterPro" id="IPR015760">
    <property type="entry name" value="TIF_IF2"/>
</dbReference>
<dbReference type="InterPro" id="IPR023115">
    <property type="entry name" value="TIF_IF2_dom3"/>
</dbReference>
<dbReference type="InterPro" id="IPR036925">
    <property type="entry name" value="TIF_IF2_dom3_sf"/>
</dbReference>
<dbReference type="InterPro" id="IPR009000">
    <property type="entry name" value="Transl_B-barrel_sf"/>
</dbReference>
<dbReference type="NCBIfam" id="TIGR00487">
    <property type="entry name" value="IF-2"/>
    <property type="match status" value="1"/>
</dbReference>
<dbReference type="NCBIfam" id="TIGR00231">
    <property type="entry name" value="small_GTP"/>
    <property type="match status" value="1"/>
</dbReference>
<dbReference type="PANTHER" id="PTHR43381:SF5">
    <property type="entry name" value="TR-TYPE G DOMAIN-CONTAINING PROTEIN"/>
    <property type="match status" value="1"/>
</dbReference>
<dbReference type="PANTHER" id="PTHR43381">
    <property type="entry name" value="TRANSLATION INITIATION FACTOR IF-2-RELATED"/>
    <property type="match status" value="1"/>
</dbReference>
<dbReference type="Pfam" id="PF22042">
    <property type="entry name" value="EF-G_D2"/>
    <property type="match status" value="1"/>
</dbReference>
<dbReference type="Pfam" id="PF00009">
    <property type="entry name" value="GTP_EFTU"/>
    <property type="match status" value="1"/>
</dbReference>
<dbReference type="Pfam" id="PF03144">
    <property type="entry name" value="GTP_EFTU_D2"/>
    <property type="match status" value="1"/>
</dbReference>
<dbReference type="Pfam" id="PF11987">
    <property type="entry name" value="IF-2"/>
    <property type="match status" value="1"/>
</dbReference>
<dbReference type="Pfam" id="PF08364">
    <property type="entry name" value="IF2_assoc"/>
    <property type="match status" value="1"/>
</dbReference>
<dbReference type="Pfam" id="PF04760">
    <property type="entry name" value="IF2_N"/>
    <property type="match status" value="1"/>
</dbReference>
<dbReference type="SUPFAM" id="SSF52156">
    <property type="entry name" value="Initiation factor IF2/eIF5b, domain 3"/>
    <property type="match status" value="1"/>
</dbReference>
<dbReference type="SUPFAM" id="SSF52540">
    <property type="entry name" value="P-loop containing nucleoside triphosphate hydrolases"/>
    <property type="match status" value="1"/>
</dbReference>
<dbReference type="SUPFAM" id="SSF46955">
    <property type="entry name" value="Putative DNA-binding domain"/>
    <property type="match status" value="1"/>
</dbReference>
<dbReference type="SUPFAM" id="SSF50447">
    <property type="entry name" value="Translation proteins"/>
    <property type="match status" value="2"/>
</dbReference>
<dbReference type="PROSITE" id="PS51722">
    <property type="entry name" value="G_TR_2"/>
    <property type="match status" value="1"/>
</dbReference>
<dbReference type="PROSITE" id="PS01176">
    <property type="entry name" value="IF2"/>
    <property type="match status" value="1"/>
</dbReference>
<keyword id="KW-0963">Cytoplasm</keyword>
<keyword id="KW-0342">GTP-binding</keyword>
<keyword id="KW-0396">Initiation factor</keyword>
<keyword id="KW-0547">Nucleotide-binding</keyword>
<keyword id="KW-0648">Protein biosynthesis</keyword>
<evidence type="ECO:0000255" key="1">
    <source>
        <dbReference type="HAMAP-Rule" id="MF_00100"/>
    </source>
</evidence>
<evidence type="ECO:0000256" key="2">
    <source>
        <dbReference type="SAM" id="MobiDB-lite"/>
    </source>
</evidence>
<reference key="1">
    <citation type="journal article" date="2000" name="Nature">
        <title>The genome sequence of the plant pathogen Xylella fastidiosa.</title>
        <authorList>
            <person name="Simpson A.J.G."/>
            <person name="Reinach F.C."/>
            <person name="Arruda P."/>
            <person name="Abreu F.A."/>
            <person name="Acencio M."/>
            <person name="Alvarenga R."/>
            <person name="Alves L.M.C."/>
            <person name="Araya J.E."/>
            <person name="Baia G.S."/>
            <person name="Baptista C.S."/>
            <person name="Barros M.H."/>
            <person name="Bonaccorsi E.D."/>
            <person name="Bordin S."/>
            <person name="Bove J.M."/>
            <person name="Briones M.R.S."/>
            <person name="Bueno M.R.P."/>
            <person name="Camargo A.A."/>
            <person name="Camargo L.E.A."/>
            <person name="Carraro D.M."/>
            <person name="Carrer H."/>
            <person name="Colauto N.B."/>
            <person name="Colombo C."/>
            <person name="Costa F.F."/>
            <person name="Costa M.C.R."/>
            <person name="Costa-Neto C.M."/>
            <person name="Coutinho L.L."/>
            <person name="Cristofani M."/>
            <person name="Dias-Neto E."/>
            <person name="Docena C."/>
            <person name="El-Dorry H."/>
            <person name="Facincani A.P."/>
            <person name="Ferreira A.J.S."/>
            <person name="Ferreira V.C.A."/>
            <person name="Ferro J.A."/>
            <person name="Fraga J.S."/>
            <person name="Franca S.C."/>
            <person name="Franco M.C."/>
            <person name="Frohme M."/>
            <person name="Furlan L.R."/>
            <person name="Garnier M."/>
            <person name="Goldman G.H."/>
            <person name="Goldman M.H.S."/>
            <person name="Gomes S.L."/>
            <person name="Gruber A."/>
            <person name="Ho P.L."/>
            <person name="Hoheisel J.D."/>
            <person name="Junqueira M.L."/>
            <person name="Kemper E.L."/>
            <person name="Kitajima J.P."/>
            <person name="Krieger J.E."/>
            <person name="Kuramae E.E."/>
            <person name="Laigret F."/>
            <person name="Lambais M.R."/>
            <person name="Leite L.C.C."/>
            <person name="Lemos E.G.M."/>
            <person name="Lemos M.V.F."/>
            <person name="Lopes S.A."/>
            <person name="Lopes C.R."/>
            <person name="Machado J.A."/>
            <person name="Machado M.A."/>
            <person name="Madeira A.M.B.N."/>
            <person name="Madeira H.M.F."/>
            <person name="Marino C.L."/>
            <person name="Marques M.V."/>
            <person name="Martins E.A.L."/>
            <person name="Martins E.M.F."/>
            <person name="Matsukuma A.Y."/>
            <person name="Menck C.F.M."/>
            <person name="Miracca E.C."/>
            <person name="Miyaki C.Y."/>
            <person name="Monteiro-Vitorello C.B."/>
            <person name="Moon D.H."/>
            <person name="Nagai M.A."/>
            <person name="Nascimento A.L.T.O."/>
            <person name="Netto L.E.S."/>
            <person name="Nhani A. Jr."/>
            <person name="Nobrega F.G."/>
            <person name="Nunes L.R."/>
            <person name="Oliveira M.A."/>
            <person name="de Oliveira M.C."/>
            <person name="de Oliveira R.C."/>
            <person name="Palmieri D.A."/>
            <person name="Paris A."/>
            <person name="Peixoto B.R."/>
            <person name="Pereira G.A.G."/>
            <person name="Pereira H.A. Jr."/>
            <person name="Pesquero J.B."/>
            <person name="Quaggio R.B."/>
            <person name="Roberto P.G."/>
            <person name="Rodrigues V."/>
            <person name="de Rosa A.J.M."/>
            <person name="de Rosa V.E. Jr."/>
            <person name="de Sa R.G."/>
            <person name="Santelli R.V."/>
            <person name="Sawasaki H.E."/>
            <person name="da Silva A.C.R."/>
            <person name="da Silva A.M."/>
            <person name="da Silva F.R."/>
            <person name="Silva W.A. Jr."/>
            <person name="da Silveira J.F."/>
            <person name="Silvestri M.L.Z."/>
            <person name="Siqueira W.J."/>
            <person name="de Souza A.A."/>
            <person name="de Souza A.P."/>
            <person name="Terenzi M.F."/>
            <person name="Truffi D."/>
            <person name="Tsai S.M."/>
            <person name="Tsuhako M.H."/>
            <person name="Vallada H."/>
            <person name="Van Sluys M.A."/>
            <person name="Verjovski-Almeida S."/>
            <person name="Vettore A.L."/>
            <person name="Zago M.A."/>
            <person name="Zatz M."/>
            <person name="Meidanis J."/>
            <person name="Setubal J.C."/>
        </authorList>
    </citation>
    <scope>NUCLEOTIDE SEQUENCE [LARGE SCALE GENOMIC DNA]</scope>
    <source>
        <strain>9a5c</strain>
    </source>
</reference>